<feature type="chain" id="PRO_1000057119" description="Ribosome maturation factor RimM">
    <location>
        <begin position="1"/>
        <end position="179"/>
    </location>
</feature>
<feature type="domain" description="PRC barrel" evidence="1">
    <location>
        <begin position="100"/>
        <end position="176"/>
    </location>
</feature>
<reference key="1">
    <citation type="journal article" date="2007" name="PLoS Genet.">
        <title>Patterns and implications of gene gain and loss in the evolution of Prochlorococcus.</title>
        <authorList>
            <person name="Kettler G.C."/>
            <person name="Martiny A.C."/>
            <person name="Huang K."/>
            <person name="Zucker J."/>
            <person name="Coleman M.L."/>
            <person name="Rodrigue S."/>
            <person name="Chen F."/>
            <person name="Lapidus A."/>
            <person name="Ferriera S."/>
            <person name="Johnson J."/>
            <person name="Steglich C."/>
            <person name="Church G.M."/>
            <person name="Richardson P."/>
            <person name="Chisholm S.W."/>
        </authorList>
    </citation>
    <scope>NUCLEOTIDE SEQUENCE [LARGE SCALE GENOMIC DNA]</scope>
    <source>
        <strain>MIT 9215</strain>
    </source>
</reference>
<sequence length="179" mass="20733">MINKNKWLTVGLITSCHGINGQVKVKSLSDFEERFLKPGMRWLQKEDEPPSKIELISGFKQPGKQTFVIKLKDINSRNHAEQLKKFKILVKTNEIPKLKKEEFHLLELINLKVNTLENDKLNTIGKVINLENEKNNLLVIKLFKNQKEVFIPFVKEIVPIVDIKNNFIIINPPNGLLEL</sequence>
<name>RIMM_PROM2</name>
<evidence type="ECO:0000255" key="1">
    <source>
        <dbReference type="HAMAP-Rule" id="MF_00014"/>
    </source>
</evidence>
<proteinExistence type="inferred from homology"/>
<keyword id="KW-0143">Chaperone</keyword>
<keyword id="KW-0963">Cytoplasm</keyword>
<keyword id="KW-0690">Ribosome biogenesis</keyword>
<keyword id="KW-0698">rRNA processing</keyword>
<comment type="function">
    <text evidence="1">An accessory protein needed during the final step in the assembly of 30S ribosomal subunit, possibly for assembly of the head region. Essential for efficient processing of 16S rRNA. May be needed both before and after RbfA during the maturation of 16S rRNA. It has affinity for free ribosomal 30S subunits but not for 70S ribosomes.</text>
</comment>
<comment type="subunit">
    <text evidence="1">Binds ribosomal protein uS19.</text>
</comment>
<comment type="subcellular location">
    <subcellularLocation>
        <location evidence="1">Cytoplasm</location>
    </subcellularLocation>
</comment>
<comment type="domain">
    <text evidence="1">The PRC barrel domain binds ribosomal protein uS19.</text>
</comment>
<comment type="similarity">
    <text evidence="1">Belongs to the RimM family.</text>
</comment>
<organism>
    <name type="scientific">Prochlorococcus marinus (strain MIT 9215)</name>
    <dbReference type="NCBI Taxonomy" id="93060"/>
    <lineage>
        <taxon>Bacteria</taxon>
        <taxon>Bacillati</taxon>
        <taxon>Cyanobacteriota</taxon>
        <taxon>Cyanophyceae</taxon>
        <taxon>Synechococcales</taxon>
        <taxon>Prochlorococcaceae</taxon>
        <taxon>Prochlorococcus</taxon>
    </lineage>
</organism>
<protein>
    <recommendedName>
        <fullName evidence="1">Ribosome maturation factor RimM</fullName>
    </recommendedName>
</protein>
<accession>A8G7B1</accession>
<gene>
    <name evidence="1" type="primary">rimM</name>
    <name type="ordered locus">P9215_18791</name>
</gene>
<dbReference type="EMBL" id="CP000825">
    <property type="protein sequence ID" value="ABV51492.1"/>
    <property type="molecule type" value="Genomic_DNA"/>
</dbReference>
<dbReference type="RefSeq" id="WP_012008490.1">
    <property type="nucleotide sequence ID" value="NC_009840.1"/>
</dbReference>
<dbReference type="SMR" id="A8G7B1"/>
<dbReference type="STRING" id="93060.P9215_18791"/>
<dbReference type="KEGG" id="pmh:P9215_18791"/>
<dbReference type="eggNOG" id="COG0806">
    <property type="taxonomic scope" value="Bacteria"/>
</dbReference>
<dbReference type="HOGENOM" id="CLU_077636_3_0_3"/>
<dbReference type="OrthoDB" id="9810331at2"/>
<dbReference type="Proteomes" id="UP000002014">
    <property type="component" value="Chromosome"/>
</dbReference>
<dbReference type="GO" id="GO:0005737">
    <property type="term" value="C:cytoplasm"/>
    <property type="evidence" value="ECO:0007669"/>
    <property type="project" value="UniProtKB-SubCell"/>
</dbReference>
<dbReference type="GO" id="GO:0005840">
    <property type="term" value="C:ribosome"/>
    <property type="evidence" value="ECO:0007669"/>
    <property type="project" value="InterPro"/>
</dbReference>
<dbReference type="GO" id="GO:0043022">
    <property type="term" value="F:ribosome binding"/>
    <property type="evidence" value="ECO:0007669"/>
    <property type="project" value="InterPro"/>
</dbReference>
<dbReference type="GO" id="GO:0042274">
    <property type="term" value="P:ribosomal small subunit biogenesis"/>
    <property type="evidence" value="ECO:0007669"/>
    <property type="project" value="UniProtKB-UniRule"/>
</dbReference>
<dbReference type="GO" id="GO:0006364">
    <property type="term" value="P:rRNA processing"/>
    <property type="evidence" value="ECO:0007669"/>
    <property type="project" value="UniProtKB-UniRule"/>
</dbReference>
<dbReference type="Gene3D" id="2.30.30.240">
    <property type="entry name" value="PRC-barrel domain"/>
    <property type="match status" value="1"/>
</dbReference>
<dbReference type="Gene3D" id="2.40.30.60">
    <property type="entry name" value="RimM"/>
    <property type="match status" value="1"/>
</dbReference>
<dbReference type="HAMAP" id="MF_00014">
    <property type="entry name" value="Ribosome_mat_RimM"/>
    <property type="match status" value="1"/>
</dbReference>
<dbReference type="InterPro" id="IPR011033">
    <property type="entry name" value="PRC_barrel-like_sf"/>
</dbReference>
<dbReference type="InterPro" id="IPR056792">
    <property type="entry name" value="PRC_RimM"/>
</dbReference>
<dbReference type="InterPro" id="IPR011961">
    <property type="entry name" value="RimM"/>
</dbReference>
<dbReference type="InterPro" id="IPR002676">
    <property type="entry name" value="RimM_N"/>
</dbReference>
<dbReference type="InterPro" id="IPR036976">
    <property type="entry name" value="RimM_N_sf"/>
</dbReference>
<dbReference type="InterPro" id="IPR009000">
    <property type="entry name" value="Transl_B-barrel_sf"/>
</dbReference>
<dbReference type="NCBIfam" id="TIGR02273">
    <property type="entry name" value="16S_RimM"/>
    <property type="match status" value="1"/>
</dbReference>
<dbReference type="PANTHER" id="PTHR33692">
    <property type="entry name" value="RIBOSOME MATURATION FACTOR RIMM"/>
    <property type="match status" value="1"/>
</dbReference>
<dbReference type="PANTHER" id="PTHR33692:SF1">
    <property type="entry name" value="RIBOSOME MATURATION FACTOR RIMM"/>
    <property type="match status" value="1"/>
</dbReference>
<dbReference type="Pfam" id="PF24986">
    <property type="entry name" value="PRC_RimM"/>
    <property type="match status" value="1"/>
</dbReference>
<dbReference type="Pfam" id="PF01782">
    <property type="entry name" value="RimM"/>
    <property type="match status" value="1"/>
</dbReference>
<dbReference type="SUPFAM" id="SSF50346">
    <property type="entry name" value="PRC-barrel domain"/>
    <property type="match status" value="1"/>
</dbReference>
<dbReference type="SUPFAM" id="SSF50447">
    <property type="entry name" value="Translation proteins"/>
    <property type="match status" value="1"/>
</dbReference>